<keyword id="KW-0975">Bacterial flagellum</keyword>
<keyword id="KW-0973">c-di-GMP</keyword>
<keyword id="KW-0547">Nucleotide-binding</keyword>
<keyword id="KW-1185">Reference proteome</keyword>
<comment type="function">
    <text evidence="1">Acts as a flagellar brake, regulating swimming and swarming in a bis-(3'-5') cyclic diguanylic acid (c-di-GMP)-dependent manner. Binds 1 c-di-GMP dimer per subunit. Increasing levels of c-di-GMP lead to decreased motility.</text>
</comment>
<comment type="subunit">
    <text evidence="1">Monomer. Interacts with the flagellar basal bodies.</text>
</comment>
<comment type="subcellular location">
    <subcellularLocation>
        <location evidence="1">Bacterial flagellum basal body</location>
    </subcellularLocation>
</comment>
<comment type="similarity">
    <text evidence="1">Belongs to the YcgR family.</text>
</comment>
<evidence type="ECO:0000255" key="1">
    <source>
        <dbReference type="HAMAP-Rule" id="MF_01457"/>
    </source>
</evidence>
<name>YCGR_THISH</name>
<protein>
    <recommendedName>
        <fullName evidence="1">Flagellar brake protein YcgR</fullName>
    </recommendedName>
    <alternativeName>
        <fullName evidence="1">Cyclic di-GMP binding protein YcgR</fullName>
    </alternativeName>
</protein>
<reference key="1">
    <citation type="journal article" date="2011" name="Stand. Genomic Sci.">
        <title>Complete genome sequence of 'Thioalkalivibrio sulfidophilus' HL-EbGr7.</title>
        <authorList>
            <person name="Muyzer G."/>
            <person name="Sorokin D.Y."/>
            <person name="Mavromatis K."/>
            <person name="Lapidus A."/>
            <person name="Clum A."/>
            <person name="Ivanova N."/>
            <person name="Pati A."/>
            <person name="d'Haeseleer P."/>
            <person name="Woyke T."/>
            <person name="Kyrpides N.C."/>
        </authorList>
    </citation>
    <scope>NUCLEOTIDE SEQUENCE [LARGE SCALE GENOMIC DNA]</scope>
    <source>
        <strain>HL-EbGR7</strain>
    </source>
</reference>
<gene>
    <name evidence="1" type="primary">ycgR</name>
    <name type="ordered locus">Tgr7_1211</name>
</gene>
<sequence>MNETPAVPPSPEVEGSLNEQISHRRRILAVLDAMKDGRALLSARIENQRGYFNTTLLKIDAEKGYVFLDELAPADGHEKIAVGQTLHLYGFYNNLPAHFAIEVIHVGEHEGIAFYAGPLPKLIHYQQKRAHFRAYVGLGKELKVRLRKGDGAQISGRLQDISLGGFGALMPADSVFEDLEIVEVEALELPDHHAIACSAEIRHSHPTQGRVHIGARFTQLAPQAERQLLQAIVELEREQLRKQSRD</sequence>
<feature type="chain" id="PRO_0000395287" description="Flagellar brake protein YcgR">
    <location>
        <begin position="1"/>
        <end position="246"/>
    </location>
</feature>
<feature type="domain" description="PilZ" evidence="1">
    <location>
        <begin position="128"/>
        <end position="232"/>
    </location>
</feature>
<dbReference type="EMBL" id="CP001339">
    <property type="protein sequence ID" value="ACL72297.1"/>
    <property type="molecule type" value="Genomic_DNA"/>
</dbReference>
<dbReference type="RefSeq" id="WP_012637780.1">
    <property type="nucleotide sequence ID" value="NC_011901.1"/>
</dbReference>
<dbReference type="SMR" id="B8GQA2"/>
<dbReference type="STRING" id="396588.Tgr7_1211"/>
<dbReference type="KEGG" id="tgr:Tgr7_1211"/>
<dbReference type="eggNOG" id="COG5581">
    <property type="taxonomic scope" value="Bacteria"/>
</dbReference>
<dbReference type="HOGENOM" id="CLU_1174300_0_0_6"/>
<dbReference type="OrthoDB" id="5792836at2"/>
<dbReference type="Proteomes" id="UP000002383">
    <property type="component" value="Chromosome"/>
</dbReference>
<dbReference type="GO" id="GO:0009425">
    <property type="term" value="C:bacterial-type flagellum basal body"/>
    <property type="evidence" value="ECO:0007669"/>
    <property type="project" value="UniProtKB-SubCell"/>
</dbReference>
<dbReference type="GO" id="GO:0035438">
    <property type="term" value="F:cyclic-di-GMP binding"/>
    <property type="evidence" value="ECO:0007669"/>
    <property type="project" value="UniProtKB-UniRule"/>
</dbReference>
<dbReference type="GO" id="GO:0071973">
    <property type="term" value="P:bacterial-type flagellum-dependent cell motility"/>
    <property type="evidence" value="ECO:0007669"/>
    <property type="project" value="UniProtKB-UniRule"/>
</dbReference>
<dbReference type="GO" id="GO:0071945">
    <property type="term" value="P:regulation of bacterial-type flagellum-dependent cell motility by regulation of motor speed"/>
    <property type="evidence" value="ECO:0007669"/>
    <property type="project" value="UniProtKB-UniRule"/>
</dbReference>
<dbReference type="Gene3D" id="2.30.110.10">
    <property type="entry name" value="Electron Transport, Fmn-binding Protein, Chain A"/>
    <property type="match status" value="1"/>
</dbReference>
<dbReference type="Gene3D" id="2.40.10.220">
    <property type="entry name" value="predicted glycosyltransferase like domains"/>
    <property type="match status" value="1"/>
</dbReference>
<dbReference type="HAMAP" id="MF_01457">
    <property type="entry name" value="YcgR"/>
    <property type="match status" value="1"/>
</dbReference>
<dbReference type="InterPro" id="IPR009875">
    <property type="entry name" value="PilZ_domain"/>
</dbReference>
<dbReference type="InterPro" id="IPR012349">
    <property type="entry name" value="Split_barrel_FMN-bd"/>
</dbReference>
<dbReference type="InterPro" id="IPR023787">
    <property type="entry name" value="T3SS_YcgR"/>
</dbReference>
<dbReference type="InterPro" id="IPR009926">
    <property type="entry name" value="T3SS_YcgR_PilZN"/>
</dbReference>
<dbReference type="Pfam" id="PF07238">
    <property type="entry name" value="PilZ"/>
    <property type="match status" value="1"/>
</dbReference>
<dbReference type="Pfam" id="PF07317">
    <property type="entry name" value="PilZN"/>
    <property type="match status" value="1"/>
</dbReference>
<organism>
    <name type="scientific">Thioalkalivibrio sulfidiphilus (strain HL-EbGR7)</name>
    <dbReference type="NCBI Taxonomy" id="396588"/>
    <lineage>
        <taxon>Bacteria</taxon>
        <taxon>Pseudomonadati</taxon>
        <taxon>Pseudomonadota</taxon>
        <taxon>Gammaproteobacteria</taxon>
        <taxon>Chromatiales</taxon>
        <taxon>Ectothiorhodospiraceae</taxon>
        <taxon>Thioalkalivibrio</taxon>
    </lineage>
</organism>
<accession>B8GQA2</accession>
<proteinExistence type="inferred from homology"/>